<comment type="function">
    <text evidence="2">This enzyme is involved in nucleotide metabolism: it produces dUMP, the immediate precursor of thymidine nucleotides and it decreases the intracellular concentration of dUTP so that uracil cannot be incorporated into DNA.</text>
</comment>
<comment type="catalytic activity">
    <reaction evidence="2">
        <text>dUTP + H2O = dUMP + diphosphate + H(+)</text>
        <dbReference type="Rhea" id="RHEA:10248"/>
        <dbReference type="ChEBI" id="CHEBI:15377"/>
        <dbReference type="ChEBI" id="CHEBI:15378"/>
        <dbReference type="ChEBI" id="CHEBI:33019"/>
        <dbReference type="ChEBI" id="CHEBI:61555"/>
        <dbReference type="ChEBI" id="CHEBI:246422"/>
        <dbReference type="EC" id="3.6.1.23"/>
    </reaction>
</comment>
<comment type="cofactor">
    <cofactor evidence="2">
        <name>Mg(2+)</name>
        <dbReference type="ChEBI" id="CHEBI:18420"/>
    </cofactor>
</comment>
<comment type="pathway">
    <text evidence="2">Pyrimidine metabolism; dUMP biosynthesis; dUMP from dCTP (dUTP route): step 2/2.</text>
</comment>
<comment type="subunit">
    <text evidence="2">Homotrimer.</text>
</comment>
<comment type="miscellaneous">
    <text evidence="1">Each trimer binds three substrate molecules. The ligands are bound between subunits, and for each substrate molecule, residues from adjacent subunits contribute to the binding interactions (By similarity).</text>
</comment>
<comment type="similarity">
    <text evidence="2">Belongs to the dUTPase family.</text>
</comment>
<feature type="chain" id="PRO_1000015486" description="Deoxyuridine 5'-triphosphate nucleotidohydrolase">
    <location>
        <begin position="1"/>
        <end position="154"/>
    </location>
</feature>
<feature type="binding site" evidence="2">
    <location>
        <begin position="64"/>
        <end position="66"/>
    </location>
    <ligand>
        <name>substrate</name>
    </ligand>
</feature>
<feature type="binding site" evidence="2">
    <location>
        <position position="77"/>
    </location>
    <ligand>
        <name>substrate</name>
    </ligand>
</feature>
<feature type="binding site" evidence="2">
    <location>
        <begin position="81"/>
        <end position="83"/>
    </location>
    <ligand>
        <name>substrate</name>
    </ligand>
</feature>
<feature type="binding site" evidence="2">
    <location>
        <position position="91"/>
    </location>
    <ligand>
        <name>substrate</name>
    </ligand>
</feature>
<proteinExistence type="inferred from homology"/>
<protein>
    <recommendedName>
        <fullName evidence="2">Deoxyuridine 5'-triphosphate nucleotidohydrolase</fullName>
        <shortName evidence="2">dUTPase</shortName>
        <ecNumber evidence="2">3.6.1.23</ecNumber>
    </recommendedName>
    <alternativeName>
        <fullName evidence="2">dUTP pyrophosphatase</fullName>
    </alternativeName>
</protein>
<reference key="1">
    <citation type="submission" date="2007-02" db="EMBL/GenBank/DDBJ databases">
        <title>Complete sequence of Mycobacterium sp. JLS.</title>
        <authorList>
            <consortium name="US DOE Joint Genome Institute"/>
            <person name="Copeland A."/>
            <person name="Lucas S."/>
            <person name="Lapidus A."/>
            <person name="Barry K."/>
            <person name="Detter J.C."/>
            <person name="Glavina del Rio T."/>
            <person name="Hammon N."/>
            <person name="Israni S."/>
            <person name="Dalin E."/>
            <person name="Tice H."/>
            <person name="Pitluck S."/>
            <person name="Chain P."/>
            <person name="Malfatti S."/>
            <person name="Shin M."/>
            <person name="Vergez L."/>
            <person name="Schmutz J."/>
            <person name="Larimer F."/>
            <person name="Land M."/>
            <person name="Hauser L."/>
            <person name="Kyrpides N."/>
            <person name="Mikhailova N."/>
            <person name="Miller C.D."/>
            <person name="Anderson A.J."/>
            <person name="Sims R.C."/>
            <person name="Richardson P."/>
        </authorList>
    </citation>
    <scope>NUCLEOTIDE SEQUENCE [LARGE SCALE GENOMIC DNA]</scope>
    <source>
        <strain>JLS</strain>
    </source>
</reference>
<gene>
    <name evidence="2" type="primary">dut</name>
    <name type="ordered locus">Mjls_2180</name>
</gene>
<name>DUT_MYCSJ</name>
<dbReference type="EC" id="3.6.1.23" evidence="2"/>
<dbReference type="EMBL" id="CP000580">
    <property type="protein sequence ID" value="ABN97966.1"/>
    <property type="molecule type" value="Genomic_DNA"/>
</dbReference>
<dbReference type="SMR" id="A3PYI9"/>
<dbReference type="KEGG" id="mjl:Mjls_2180"/>
<dbReference type="HOGENOM" id="CLU_068508_1_3_11"/>
<dbReference type="BioCyc" id="MSP164757:G1G8C-2200-MONOMER"/>
<dbReference type="UniPathway" id="UPA00610">
    <property type="reaction ID" value="UER00666"/>
</dbReference>
<dbReference type="GO" id="GO:0004170">
    <property type="term" value="F:dUTP diphosphatase activity"/>
    <property type="evidence" value="ECO:0007669"/>
    <property type="project" value="UniProtKB-UniRule"/>
</dbReference>
<dbReference type="GO" id="GO:0000287">
    <property type="term" value="F:magnesium ion binding"/>
    <property type="evidence" value="ECO:0007669"/>
    <property type="project" value="UniProtKB-UniRule"/>
</dbReference>
<dbReference type="GO" id="GO:0006226">
    <property type="term" value="P:dUMP biosynthetic process"/>
    <property type="evidence" value="ECO:0007669"/>
    <property type="project" value="UniProtKB-UniRule"/>
</dbReference>
<dbReference type="GO" id="GO:0046081">
    <property type="term" value="P:dUTP catabolic process"/>
    <property type="evidence" value="ECO:0007669"/>
    <property type="project" value="InterPro"/>
</dbReference>
<dbReference type="CDD" id="cd07557">
    <property type="entry name" value="trimeric_dUTPase"/>
    <property type="match status" value="1"/>
</dbReference>
<dbReference type="FunFam" id="2.70.40.10:FF:000008">
    <property type="entry name" value="Deoxyuridine 5'-triphosphate nucleotidohydrolase"/>
    <property type="match status" value="1"/>
</dbReference>
<dbReference type="Gene3D" id="2.70.40.10">
    <property type="match status" value="1"/>
</dbReference>
<dbReference type="HAMAP" id="MF_00116">
    <property type="entry name" value="dUTPase_bact"/>
    <property type="match status" value="1"/>
</dbReference>
<dbReference type="InterPro" id="IPR008181">
    <property type="entry name" value="dUTPase"/>
</dbReference>
<dbReference type="InterPro" id="IPR029054">
    <property type="entry name" value="dUTPase-like"/>
</dbReference>
<dbReference type="InterPro" id="IPR036157">
    <property type="entry name" value="dUTPase-like_sf"/>
</dbReference>
<dbReference type="InterPro" id="IPR033704">
    <property type="entry name" value="dUTPase_trimeric"/>
</dbReference>
<dbReference type="NCBIfam" id="TIGR00576">
    <property type="entry name" value="dut"/>
    <property type="match status" value="1"/>
</dbReference>
<dbReference type="NCBIfam" id="NF001862">
    <property type="entry name" value="PRK00601.1"/>
    <property type="match status" value="1"/>
</dbReference>
<dbReference type="PANTHER" id="PTHR11241">
    <property type="entry name" value="DEOXYURIDINE 5'-TRIPHOSPHATE NUCLEOTIDOHYDROLASE"/>
    <property type="match status" value="1"/>
</dbReference>
<dbReference type="PANTHER" id="PTHR11241:SF0">
    <property type="entry name" value="DEOXYURIDINE 5'-TRIPHOSPHATE NUCLEOTIDOHYDROLASE"/>
    <property type="match status" value="1"/>
</dbReference>
<dbReference type="Pfam" id="PF00692">
    <property type="entry name" value="dUTPase"/>
    <property type="match status" value="1"/>
</dbReference>
<dbReference type="SUPFAM" id="SSF51283">
    <property type="entry name" value="dUTPase-like"/>
    <property type="match status" value="1"/>
</dbReference>
<accession>A3PYI9</accession>
<keyword id="KW-0378">Hydrolase</keyword>
<keyword id="KW-0460">Magnesium</keyword>
<keyword id="KW-0479">Metal-binding</keyword>
<keyword id="KW-0546">Nucleotide metabolism</keyword>
<evidence type="ECO:0000250" key="1"/>
<evidence type="ECO:0000255" key="2">
    <source>
        <dbReference type="HAMAP-Rule" id="MF_00116"/>
    </source>
</evidence>
<sequence>MSTSLAVLRLDRELPMPARAHDGDAGVDLFSARDVELAPGQRELVPTGIAVAIPHGMVGLVHPRSGLAARVGLSIVNSPGTIDAGYRGEIKVSLINLDPHAPIVIRRGDRIAQLLVQRVELPELVEVTSFDEAGLAETTRGEGGHGSSGGHASL</sequence>
<organism>
    <name type="scientific">Mycobacterium sp. (strain JLS)</name>
    <dbReference type="NCBI Taxonomy" id="164757"/>
    <lineage>
        <taxon>Bacteria</taxon>
        <taxon>Bacillati</taxon>
        <taxon>Actinomycetota</taxon>
        <taxon>Actinomycetes</taxon>
        <taxon>Mycobacteriales</taxon>
        <taxon>Mycobacteriaceae</taxon>
        <taxon>Mycobacterium</taxon>
    </lineage>
</organism>